<comment type="function">
    <text evidence="1">Catalyzes the ATP-dependent phosphorylation of L-homoserine to L-homoserine phosphate.</text>
</comment>
<comment type="catalytic activity">
    <reaction evidence="1">
        <text>L-homoserine + ATP = O-phospho-L-homoserine + ADP + H(+)</text>
        <dbReference type="Rhea" id="RHEA:13985"/>
        <dbReference type="ChEBI" id="CHEBI:15378"/>
        <dbReference type="ChEBI" id="CHEBI:30616"/>
        <dbReference type="ChEBI" id="CHEBI:57476"/>
        <dbReference type="ChEBI" id="CHEBI:57590"/>
        <dbReference type="ChEBI" id="CHEBI:456216"/>
        <dbReference type="EC" id="2.7.1.39"/>
    </reaction>
</comment>
<comment type="pathway">
    <text evidence="1">Amino-acid biosynthesis; L-threonine biosynthesis; L-threonine from L-aspartate: step 4/5.</text>
</comment>
<comment type="subcellular location">
    <subcellularLocation>
        <location evidence="1">Cytoplasm</location>
    </subcellularLocation>
</comment>
<comment type="similarity">
    <text evidence="1">Belongs to the GHMP kinase family. Homoserine kinase subfamily.</text>
</comment>
<sequence>MVKIYAPASIGNVSVGFDVLGAAVSPIDGTLLGDCVSVTAAERFSLHNEGRFVSKLPDDPKQNIVYQCWERFCQEMGKEIPVAMVLEKNMPIGSGLGSSACSVVAGLMAMNEFCGQPLDKVTLLGMMGELEGRVSGSIHFDNVAPCYLGGMQLILEQEGYISQDVPGFSDWLWVMAYPGIKVSTAEARAILPAQYRRQDCITHGRNLAGFIHACHTQQPDLAAKMMKDVIAEPYRTQLLPGFAAARQAAQDIGALACGISGSGPTLFAVCNDQATAQRMAGWLQNHYLQNDEGFVHICRLDTAGARLLG</sequence>
<protein>
    <recommendedName>
        <fullName evidence="1">Homoserine kinase</fullName>
        <shortName evidence="1">HK</shortName>
        <shortName evidence="1">HSK</shortName>
        <ecNumber evidence="1">2.7.1.39</ecNumber>
    </recommendedName>
</protein>
<dbReference type="EC" id="2.7.1.39" evidence="1"/>
<dbReference type="EMBL" id="CP000668">
    <property type="protein sequence ID" value="ABP41531.1"/>
    <property type="molecule type" value="Genomic_DNA"/>
</dbReference>
<dbReference type="RefSeq" id="WP_002209238.1">
    <property type="nucleotide sequence ID" value="NZ_CP009715.1"/>
</dbReference>
<dbReference type="SMR" id="A4TQG9"/>
<dbReference type="GeneID" id="96664104"/>
<dbReference type="KEGG" id="ypp:YPDSF_3173"/>
<dbReference type="PATRIC" id="fig|386656.14.peg.1176"/>
<dbReference type="UniPathway" id="UPA00050">
    <property type="reaction ID" value="UER00064"/>
</dbReference>
<dbReference type="GO" id="GO:0005737">
    <property type="term" value="C:cytoplasm"/>
    <property type="evidence" value="ECO:0007669"/>
    <property type="project" value="UniProtKB-SubCell"/>
</dbReference>
<dbReference type="GO" id="GO:0005524">
    <property type="term" value="F:ATP binding"/>
    <property type="evidence" value="ECO:0007669"/>
    <property type="project" value="UniProtKB-UniRule"/>
</dbReference>
<dbReference type="GO" id="GO:0004413">
    <property type="term" value="F:homoserine kinase activity"/>
    <property type="evidence" value="ECO:0007669"/>
    <property type="project" value="UniProtKB-UniRule"/>
</dbReference>
<dbReference type="GO" id="GO:0009088">
    <property type="term" value="P:threonine biosynthetic process"/>
    <property type="evidence" value="ECO:0007669"/>
    <property type="project" value="UniProtKB-UniRule"/>
</dbReference>
<dbReference type="FunFam" id="3.30.230.10:FF:000020">
    <property type="entry name" value="Homoserine kinase"/>
    <property type="match status" value="1"/>
</dbReference>
<dbReference type="FunFam" id="3.30.70.890:FF:000002">
    <property type="entry name" value="Homoserine kinase"/>
    <property type="match status" value="1"/>
</dbReference>
<dbReference type="Gene3D" id="3.30.230.10">
    <property type="match status" value="1"/>
</dbReference>
<dbReference type="Gene3D" id="3.30.70.890">
    <property type="entry name" value="GHMP kinase, C-terminal domain"/>
    <property type="match status" value="1"/>
</dbReference>
<dbReference type="HAMAP" id="MF_00384">
    <property type="entry name" value="Homoser_kinase"/>
    <property type="match status" value="1"/>
</dbReference>
<dbReference type="InterPro" id="IPR013750">
    <property type="entry name" value="GHMP_kinase_C_dom"/>
</dbReference>
<dbReference type="InterPro" id="IPR036554">
    <property type="entry name" value="GHMP_kinase_C_sf"/>
</dbReference>
<dbReference type="InterPro" id="IPR006204">
    <property type="entry name" value="GHMP_kinase_N_dom"/>
</dbReference>
<dbReference type="InterPro" id="IPR006203">
    <property type="entry name" value="GHMP_knse_ATP-bd_CS"/>
</dbReference>
<dbReference type="InterPro" id="IPR000870">
    <property type="entry name" value="Homoserine_kinase"/>
</dbReference>
<dbReference type="InterPro" id="IPR020568">
    <property type="entry name" value="Ribosomal_Su5_D2-typ_SF"/>
</dbReference>
<dbReference type="InterPro" id="IPR014721">
    <property type="entry name" value="Ribsml_uS5_D2-typ_fold_subgr"/>
</dbReference>
<dbReference type="NCBIfam" id="NF002288">
    <property type="entry name" value="PRK01212.1-4"/>
    <property type="match status" value="1"/>
</dbReference>
<dbReference type="NCBIfam" id="TIGR00191">
    <property type="entry name" value="thrB"/>
    <property type="match status" value="1"/>
</dbReference>
<dbReference type="PANTHER" id="PTHR20861:SF1">
    <property type="entry name" value="HOMOSERINE KINASE"/>
    <property type="match status" value="1"/>
</dbReference>
<dbReference type="PANTHER" id="PTHR20861">
    <property type="entry name" value="HOMOSERINE/4-DIPHOSPHOCYTIDYL-2-C-METHYL-D-ERYTHRITOL KINASE"/>
    <property type="match status" value="1"/>
</dbReference>
<dbReference type="Pfam" id="PF08544">
    <property type="entry name" value="GHMP_kinases_C"/>
    <property type="match status" value="1"/>
</dbReference>
<dbReference type="Pfam" id="PF00288">
    <property type="entry name" value="GHMP_kinases_N"/>
    <property type="match status" value="1"/>
</dbReference>
<dbReference type="PIRSF" id="PIRSF000676">
    <property type="entry name" value="Homoser_kin"/>
    <property type="match status" value="1"/>
</dbReference>
<dbReference type="PRINTS" id="PR00958">
    <property type="entry name" value="HOMSERKINASE"/>
</dbReference>
<dbReference type="SUPFAM" id="SSF55060">
    <property type="entry name" value="GHMP Kinase, C-terminal domain"/>
    <property type="match status" value="1"/>
</dbReference>
<dbReference type="SUPFAM" id="SSF54211">
    <property type="entry name" value="Ribosomal protein S5 domain 2-like"/>
    <property type="match status" value="1"/>
</dbReference>
<dbReference type="PROSITE" id="PS00627">
    <property type="entry name" value="GHMP_KINASES_ATP"/>
    <property type="match status" value="1"/>
</dbReference>
<keyword id="KW-0028">Amino-acid biosynthesis</keyword>
<keyword id="KW-0067">ATP-binding</keyword>
<keyword id="KW-0963">Cytoplasm</keyword>
<keyword id="KW-0418">Kinase</keyword>
<keyword id="KW-0547">Nucleotide-binding</keyword>
<keyword id="KW-0791">Threonine biosynthesis</keyword>
<keyword id="KW-0808">Transferase</keyword>
<gene>
    <name evidence="1" type="primary">thrB</name>
    <name type="ordered locus">YPDSF_3173</name>
</gene>
<reference key="1">
    <citation type="submission" date="2007-02" db="EMBL/GenBank/DDBJ databases">
        <title>Complete sequence of chromosome of Yersinia pestis Pestoides F.</title>
        <authorList>
            <consortium name="US DOE Joint Genome Institute"/>
            <person name="Copeland A."/>
            <person name="Lucas S."/>
            <person name="Lapidus A."/>
            <person name="Barry K."/>
            <person name="Detter J.C."/>
            <person name="Glavina del Rio T."/>
            <person name="Hammon N."/>
            <person name="Israni S."/>
            <person name="Dalin E."/>
            <person name="Tice H."/>
            <person name="Pitluck S."/>
            <person name="Di Bartolo G."/>
            <person name="Chain P."/>
            <person name="Malfatti S."/>
            <person name="Shin M."/>
            <person name="Vergez L."/>
            <person name="Schmutz J."/>
            <person name="Larimer F."/>
            <person name="Land M."/>
            <person name="Hauser L."/>
            <person name="Worsham P."/>
            <person name="Chu M."/>
            <person name="Bearden S."/>
            <person name="Garcia E."/>
            <person name="Richardson P."/>
        </authorList>
    </citation>
    <scope>NUCLEOTIDE SEQUENCE [LARGE SCALE GENOMIC DNA]</scope>
    <source>
        <strain>Pestoides F</strain>
    </source>
</reference>
<organism>
    <name type="scientific">Yersinia pestis (strain Pestoides F)</name>
    <dbReference type="NCBI Taxonomy" id="386656"/>
    <lineage>
        <taxon>Bacteria</taxon>
        <taxon>Pseudomonadati</taxon>
        <taxon>Pseudomonadota</taxon>
        <taxon>Gammaproteobacteria</taxon>
        <taxon>Enterobacterales</taxon>
        <taxon>Yersiniaceae</taxon>
        <taxon>Yersinia</taxon>
    </lineage>
</organism>
<evidence type="ECO:0000255" key="1">
    <source>
        <dbReference type="HAMAP-Rule" id="MF_00384"/>
    </source>
</evidence>
<accession>A4TQG9</accession>
<feature type="chain" id="PRO_1000049199" description="Homoserine kinase">
    <location>
        <begin position="1"/>
        <end position="309"/>
    </location>
</feature>
<feature type="binding site" evidence="1">
    <location>
        <begin position="91"/>
        <end position="101"/>
    </location>
    <ligand>
        <name>ATP</name>
        <dbReference type="ChEBI" id="CHEBI:30616"/>
    </ligand>
</feature>
<proteinExistence type="inferred from homology"/>
<name>KHSE_YERPP</name>